<reference key="1">
    <citation type="journal article" date="2005" name="Proc. Natl. Acad. Sci. U.S.A.">
        <title>The psychrophilic lifestyle as revealed by the genome sequence of Colwellia psychrerythraea 34H through genomic and proteomic analyses.</title>
        <authorList>
            <person name="Methe B.A."/>
            <person name="Nelson K.E."/>
            <person name="Deming J.W."/>
            <person name="Momen B."/>
            <person name="Melamud E."/>
            <person name="Zhang X."/>
            <person name="Moult J."/>
            <person name="Madupu R."/>
            <person name="Nelson W.C."/>
            <person name="Dodson R.J."/>
            <person name="Brinkac L.M."/>
            <person name="Daugherty S.C."/>
            <person name="Durkin A.S."/>
            <person name="DeBoy R.T."/>
            <person name="Kolonay J.F."/>
            <person name="Sullivan S.A."/>
            <person name="Zhou L."/>
            <person name="Davidsen T.M."/>
            <person name="Wu M."/>
            <person name="Huston A.L."/>
            <person name="Lewis M."/>
            <person name="Weaver B."/>
            <person name="Weidman J.F."/>
            <person name="Khouri H."/>
            <person name="Utterback T.R."/>
            <person name="Feldblyum T.V."/>
            <person name="Fraser C.M."/>
        </authorList>
    </citation>
    <scope>NUCLEOTIDE SEQUENCE [LARGE SCALE GENOMIC DNA]</scope>
    <source>
        <strain>34H / ATCC BAA-681</strain>
    </source>
</reference>
<gene>
    <name type="ordered locus">CPS_4102</name>
</gene>
<dbReference type="EMBL" id="CP000083">
    <property type="protein sequence ID" value="AAZ26899.1"/>
    <property type="molecule type" value="Genomic_DNA"/>
</dbReference>
<dbReference type="SMR" id="Q47WR5"/>
<dbReference type="STRING" id="167879.CPS_4102"/>
<dbReference type="KEGG" id="cps:CPS_4102"/>
<dbReference type="eggNOG" id="COG3022">
    <property type="taxonomic scope" value="Bacteria"/>
</dbReference>
<dbReference type="HOGENOM" id="CLU_061989_0_0_6"/>
<dbReference type="Proteomes" id="UP000000547">
    <property type="component" value="Chromosome"/>
</dbReference>
<dbReference type="GO" id="GO:0005829">
    <property type="term" value="C:cytosol"/>
    <property type="evidence" value="ECO:0007669"/>
    <property type="project" value="TreeGrafter"/>
</dbReference>
<dbReference type="GO" id="GO:0033194">
    <property type="term" value="P:response to hydroperoxide"/>
    <property type="evidence" value="ECO:0007669"/>
    <property type="project" value="TreeGrafter"/>
</dbReference>
<dbReference type="HAMAP" id="MF_00652">
    <property type="entry name" value="UPF0246"/>
    <property type="match status" value="1"/>
</dbReference>
<dbReference type="InterPro" id="IPR005583">
    <property type="entry name" value="YaaA"/>
</dbReference>
<dbReference type="NCBIfam" id="NF002541">
    <property type="entry name" value="PRK02101.1-1"/>
    <property type="match status" value="1"/>
</dbReference>
<dbReference type="NCBIfam" id="NF002542">
    <property type="entry name" value="PRK02101.1-3"/>
    <property type="match status" value="1"/>
</dbReference>
<dbReference type="PANTHER" id="PTHR30283:SF4">
    <property type="entry name" value="PEROXIDE STRESS RESISTANCE PROTEIN YAAA"/>
    <property type="match status" value="1"/>
</dbReference>
<dbReference type="PANTHER" id="PTHR30283">
    <property type="entry name" value="PEROXIDE STRESS RESPONSE PROTEIN YAAA"/>
    <property type="match status" value="1"/>
</dbReference>
<dbReference type="Pfam" id="PF03883">
    <property type="entry name" value="H2O2_YaaD"/>
    <property type="match status" value="1"/>
</dbReference>
<organism>
    <name type="scientific">Colwellia psychrerythraea (strain 34H / ATCC BAA-681)</name>
    <name type="common">Vibrio psychroerythus</name>
    <dbReference type="NCBI Taxonomy" id="167879"/>
    <lineage>
        <taxon>Bacteria</taxon>
        <taxon>Pseudomonadati</taxon>
        <taxon>Pseudomonadota</taxon>
        <taxon>Gammaproteobacteria</taxon>
        <taxon>Alteromonadales</taxon>
        <taxon>Colwelliaceae</taxon>
        <taxon>Colwellia</taxon>
    </lineage>
</organism>
<accession>Q47WR5</accession>
<feature type="chain" id="PRO_0000262010" description="UPF0246 protein CPS_4102">
    <location>
        <begin position="1"/>
        <end position="257"/>
    </location>
</feature>
<proteinExistence type="inferred from homology"/>
<evidence type="ECO:0000255" key="1">
    <source>
        <dbReference type="HAMAP-Rule" id="MF_00652"/>
    </source>
</evidence>
<comment type="similarity">
    <text evidence="1">Belongs to the UPF0246 family.</text>
</comment>
<name>Y4102_COLP3</name>
<protein>
    <recommendedName>
        <fullName evidence="1">UPF0246 protein CPS_4102</fullName>
    </recommendedName>
</protein>
<sequence>MLLVVSPAKKLDFESPLATEKFSQPGLLEQSQLLIDDCIKLSPSEIASLMKLSDKLAGLNAARFGQWSTPFTQDNARQAILSFNGDVYTGLDAQSFSDEDFEFAQKNFRILSGLYGLLKPLDLMQAYRLEMGCKLGNSRGDNLYQFWGEIITDELNKTLSELDDDVLINLASTEYFKSVKKKSLNATIITPTFKDWKNGQYKIISFFAKKARGLMARYIIQNKLTSVEQIKTFDLAGYQYNEAMSKDNDWVFTRKES</sequence>